<gene>
    <name evidence="1" type="primary">hemH</name>
    <name type="ordered locus">VS_2267</name>
</gene>
<protein>
    <recommendedName>
        <fullName evidence="1">Ferrochelatase</fullName>
        <ecNumber evidence="1">4.98.1.1</ecNumber>
    </recommendedName>
    <alternativeName>
        <fullName evidence="1">Heme synthase</fullName>
    </alternativeName>
    <alternativeName>
        <fullName evidence="1">Protoheme ferro-lyase</fullName>
    </alternativeName>
</protein>
<sequence length="320" mass="35966">MENNKKQGVLLVNLGTPDSATPAGVRRFLSEFLHDKRVVNLTRWLWCPILHGVILPIRAPKVAKLYQSVWMDEGSPLLVYSQRQAEKLQKKLQIPVALGMTYGNPSLKTGVEQLMDQGVEDIIVLPLYPQYSGTTTAAVSDGLTKAFKQMPVIPSYRFIRDYYAHPSYAKALAESVRSHWDKNGRADHLVCSFHGIPKRLADEGDIYPQHCEATTELLAAELGLSADDITMTYQSRFGREEWLKPYTDETLESLPSKGIKKIDIMAPAFSVDCLETLEEISDQCKETFIDAGGSDFSYITCLNDRDSHIDMMAELVALYR</sequence>
<dbReference type="EC" id="4.98.1.1" evidence="1"/>
<dbReference type="EMBL" id="FM954972">
    <property type="protein sequence ID" value="CAV19430.1"/>
    <property type="molecule type" value="Genomic_DNA"/>
</dbReference>
<dbReference type="SMR" id="B7VII4"/>
<dbReference type="STRING" id="575788.VS_2267"/>
<dbReference type="KEGG" id="vsp:VS_2267"/>
<dbReference type="PATRIC" id="fig|575788.5.peg.3529"/>
<dbReference type="eggNOG" id="COG0276">
    <property type="taxonomic scope" value="Bacteria"/>
</dbReference>
<dbReference type="HOGENOM" id="CLU_018884_0_0_6"/>
<dbReference type="UniPathway" id="UPA00252">
    <property type="reaction ID" value="UER00325"/>
</dbReference>
<dbReference type="Proteomes" id="UP000009100">
    <property type="component" value="Chromosome 1"/>
</dbReference>
<dbReference type="GO" id="GO:0005737">
    <property type="term" value="C:cytoplasm"/>
    <property type="evidence" value="ECO:0007669"/>
    <property type="project" value="UniProtKB-SubCell"/>
</dbReference>
<dbReference type="GO" id="GO:0004325">
    <property type="term" value="F:ferrochelatase activity"/>
    <property type="evidence" value="ECO:0007669"/>
    <property type="project" value="UniProtKB-UniRule"/>
</dbReference>
<dbReference type="GO" id="GO:0046872">
    <property type="term" value="F:metal ion binding"/>
    <property type="evidence" value="ECO:0007669"/>
    <property type="project" value="UniProtKB-KW"/>
</dbReference>
<dbReference type="GO" id="GO:0006783">
    <property type="term" value="P:heme biosynthetic process"/>
    <property type="evidence" value="ECO:0007669"/>
    <property type="project" value="UniProtKB-UniRule"/>
</dbReference>
<dbReference type="CDD" id="cd00419">
    <property type="entry name" value="Ferrochelatase_C"/>
    <property type="match status" value="1"/>
</dbReference>
<dbReference type="CDD" id="cd03411">
    <property type="entry name" value="Ferrochelatase_N"/>
    <property type="match status" value="1"/>
</dbReference>
<dbReference type="FunFam" id="3.40.50.1400:FF:000002">
    <property type="entry name" value="Ferrochelatase"/>
    <property type="match status" value="1"/>
</dbReference>
<dbReference type="Gene3D" id="3.40.50.1400">
    <property type="match status" value="2"/>
</dbReference>
<dbReference type="HAMAP" id="MF_00323">
    <property type="entry name" value="Ferrochelatase"/>
    <property type="match status" value="1"/>
</dbReference>
<dbReference type="InterPro" id="IPR001015">
    <property type="entry name" value="Ferrochelatase"/>
</dbReference>
<dbReference type="InterPro" id="IPR019772">
    <property type="entry name" value="Ferrochelatase_AS"/>
</dbReference>
<dbReference type="InterPro" id="IPR033644">
    <property type="entry name" value="Ferrochelatase_C"/>
</dbReference>
<dbReference type="InterPro" id="IPR033659">
    <property type="entry name" value="Ferrochelatase_N"/>
</dbReference>
<dbReference type="NCBIfam" id="TIGR00109">
    <property type="entry name" value="hemH"/>
    <property type="match status" value="1"/>
</dbReference>
<dbReference type="PANTHER" id="PTHR11108">
    <property type="entry name" value="FERROCHELATASE"/>
    <property type="match status" value="1"/>
</dbReference>
<dbReference type="PANTHER" id="PTHR11108:SF1">
    <property type="entry name" value="FERROCHELATASE, MITOCHONDRIAL"/>
    <property type="match status" value="1"/>
</dbReference>
<dbReference type="Pfam" id="PF00762">
    <property type="entry name" value="Ferrochelatase"/>
    <property type="match status" value="1"/>
</dbReference>
<dbReference type="SUPFAM" id="SSF53800">
    <property type="entry name" value="Chelatase"/>
    <property type="match status" value="1"/>
</dbReference>
<dbReference type="PROSITE" id="PS00534">
    <property type="entry name" value="FERROCHELATASE"/>
    <property type="match status" value="1"/>
</dbReference>
<name>HEMH_VIBA3</name>
<organism>
    <name type="scientific">Vibrio atlanticus (strain LGP32)</name>
    <name type="common">Vibrio splendidus (strain Mel32)</name>
    <dbReference type="NCBI Taxonomy" id="575788"/>
    <lineage>
        <taxon>Bacteria</taxon>
        <taxon>Pseudomonadati</taxon>
        <taxon>Pseudomonadota</taxon>
        <taxon>Gammaproteobacteria</taxon>
        <taxon>Vibrionales</taxon>
        <taxon>Vibrionaceae</taxon>
        <taxon>Vibrio</taxon>
    </lineage>
</organism>
<proteinExistence type="inferred from homology"/>
<reference key="1">
    <citation type="submission" date="2009-02" db="EMBL/GenBank/DDBJ databases">
        <title>Vibrio splendidus str. LGP32 complete genome.</title>
        <authorList>
            <person name="Mazel D."/>
            <person name="Le Roux F."/>
        </authorList>
    </citation>
    <scope>NUCLEOTIDE SEQUENCE [LARGE SCALE GENOMIC DNA]</scope>
    <source>
        <strain>LGP32</strain>
    </source>
</reference>
<evidence type="ECO:0000255" key="1">
    <source>
        <dbReference type="HAMAP-Rule" id="MF_00323"/>
    </source>
</evidence>
<feature type="chain" id="PRO_1000189996" description="Ferrochelatase">
    <location>
        <begin position="1"/>
        <end position="320"/>
    </location>
</feature>
<feature type="binding site" evidence="1">
    <location>
        <position position="194"/>
    </location>
    <ligand>
        <name>Fe cation</name>
        <dbReference type="ChEBI" id="CHEBI:24875"/>
    </ligand>
</feature>
<feature type="binding site" evidence="1">
    <location>
        <position position="275"/>
    </location>
    <ligand>
        <name>Fe cation</name>
        <dbReference type="ChEBI" id="CHEBI:24875"/>
    </ligand>
</feature>
<comment type="function">
    <text evidence="1">Catalyzes the ferrous insertion into protoporphyrin IX.</text>
</comment>
<comment type="catalytic activity">
    <reaction evidence="1">
        <text>heme b + 2 H(+) = protoporphyrin IX + Fe(2+)</text>
        <dbReference type="Rhea" id="RHEA:22584"/>
        <dbReference type="ChEBI" id="CHEBI:15378"/>
        <dbReference type="ChEBI" id="CHEBI:29033"/>
        <dbReference type="ChEBI" id="CHEBI:57306"/>
        <dbReference type="ChEBI" id="CHEBI:60344"/>
        <dbReference type="EC" id="4.98.1.1"/>
    </reaction>
</comment>
<comment type="pathway">
    <text evidence="1">Porphyrin-containing compound metabolism; protoheme biosynthesis; protoheme from protoporphyrin-IX: step 1/1.</text>
</comment>
<comment type="subcellular location">
    <subcellularLocation>
        <location evidence="1">Cytoplasm</location>
    </subcellularLocation>
</comment>
<comment type="similarity">
    <text evidence="1">Belongs to the ferrochelatase family.</text>
</comment>
<keyword id="KW-0963">Cytoplasm</keyword>
<keyword id="KW-0350">Heme biosynthesis</keyword>
<keyword id="KW-0408">Iron</keyword>
<keyword id="KW-0456">Lyase</keyword>
<keyword id="KW-0479">Metal-binding</keyword>
<keyword id="KW-0627">Porphyrin biosynthesis</keyword>
<accession>B7VII4</accession>